<reference key="1">
    <citation type="journal article" date="1997" name="FEBS Lett.">
        <title>Hedgehog and patched gene expression in adult ocular tissues.</title>
        <authorList>
            <person name="Takabatake T."/>
            <person name="Ogawa M."/>
            <person name="Takahashi T.C."/>
            <person name="Mizuno M."/>
            <person name="Okamoto M."/>
            <person name="Takeshima K."/>
        </authorList>
    </citation>
    <scope>NUCLEOTIDE SEQUENCE [MRNA]</scope>
    <source>
        <tissue>Neuroretina</tissue>
    </source>
</reference>
<evidence type="ECO:0000250" key="1"/>
<evidence type="ECO:0000255" key="2"/>
<evidence type="ECO:0000255" key="3">
    <source>
        <dbReference type="PROSITE-ProRule" id="PRU00199"/>
    </source>
</evidence>
<evidence type="ECO:0000305" key="4"/>
<name>PTC1_CYNPY</name>
<gene>
    <name type="primary">PTC1</name>
</gene>
<keyword id="KW-0325">Glycoprotein</keyword>
<keyword id="KW-0472">Membrane</keyword>
<keyword id="KW-0675">Receptor</keyword>
<keyword id="KW-0812">Transmembrane</keyword>
<keyword id="KW-1133">Transmembrane helix</keyword>
<accession>O42335</accession>
<protein>
    <recommendedName>
        <fullName>Protein patched homolog 1</fullName>
        <shortName>PTC1</shortName>
    </recommendedName>
</protein>
<dbReference type="EMBL" id="AB000848">
    <property type="protein sequence ID" value="BAA21678.1"/>
    <property type="molecule type" value="mRNA"/>
</dbReference>
<dbReference type="SMR" id="O42335"/>
<dbReference type="GlyCosmos" id="O42335">
    <property type="glycosylation" value="3 sites, No reported glycans"/>
</dbReference>
<dbReference type="GO" id="GO:0005886">
    <property type="term" value="C:plasma membrane"/>
    <property type="evidence" value="ECO:0007669"/>
    <property type="project" value="TreeGrafter"/>
</dbReference>
<dbReference type="GO" id="GO:0097108">
    <property type="term" value="F:hedgehog family protein binding"/>
    <property type="evidence" value="ECO:0007669"/>
    <property type="project" value="TreeGrafter"/>
</dbReference>
<dbReference type="GO" id="GO:0008158">
    <property type="term" value="F:hedgehog receptor activity"/>
    <property type="evidence" value="ECO:0007669"/>
    <property type="project" value="TreeGrafter"/>
</dbReference>
<dbReference type="GO" id="GO:0005119">
    <property type="term" value="F:smoothened binding"/>
    <property type="evidence" value="ECO:0007669"/>
    <property type="project" value="TreeGrafter"/>
</dbReference>
<dbReference type="GO" id="GO:0045879">
    <property type="term" value="P:negative regulation of smoothened signaling pathway"/>
    <property type="evidence" value="ECO:0007669"/>
    <property type="project" value="TreeGrafter"/>
</dbReference>
<dbReference type="InterPro" id="IPR000731">
    <property type="entry name" value="SSD"/>
</dbReference>
<dbReference type="PANTHER" id="PTHR46022">
    <property type="entry name" value="PROTEIN PATCHED"/>
    <property type="match status" value="1"/>
</dbReference>
<dbReference type="PANTHER" id="PTHR46022:SF5">
    <property type="entry name" value="PROTEIN PATCHED HOMOLOG 1"/>
    <property type="match status" value="1"/>
</dbReference>
<dbReference type="PROSITE" id="PS50156">
    <property type="entry name" value="SSD"/>
    <property type="match status" value="1"/>
</dbReference>
<organism>
    <name type="scientific">Cynops pyrrhogaster</name>
    <name type="common">Japanese fire-bellied newt</name>
    <name type="synonym">Molge pyrrhogaster</name>
    <dbReference type="NCBI Taxonomy" id="8330"/>
    <lineage>
        <taxon>Eukaryota</taxon>
        <taxon>Metazoa</taxon>
        <taxon>Chordata</taxon>
        <taxon>Craniata</taxon>
        <taxon>Vertebrata</taxon>
        <taxon>Euteleostomi</taxon>
        <taxon>Amphibia</taxon>
        <taxon>Batrachia</taxon>
        <taxon>Caudata</taxon>
        <taxon>Salamandroidea</taxon>
        <taxon>Salamandridae</taxon>
        <taxon>Pleurodelinae</taxon>
        <taxon>Cynops</taxon>
    </lineage>
</organism>
<feature type="chain" id="PRO_0000205968" description="Protein patched homolog 1">
    <location>
        <begin position="1" status="less than"/>
        <end position="257" status="greater than"/>
    </location>
</feature>
<feature type="topological domain" description="Extracellular" evidence="2">
    <location>
        <begin position="1" status="less than"/>
        <end position="199"/>
    </location>
</feature>
<feature type="transmembrane region" description="Helical" evidence="2">
    <location>
        <begin position="200"/>
        <end position="220"/>
    </location>
</feature>
<feature type="topological domain" description="Cytoplasmic" evidence="2">
    <location>
        <begin position="221"/>
        <end position="235"/>
    </location>
</feature>
<feature type="transmembrane region" description="Helical" evidence="2">
    <location>
        <begin position="236"/>
        <end position="256"/>
    </location>
</feature>
<feature type="domain" description="SSD" evidence="3">
    <location>
        <begin position="201"/>
        <end position="257" status="greater than"/>
    </location>
</feature>
<feature type="glycosylation site" description="N-linked (GlcNAc...) asparagine" evidence="2">
    <location>
        <position position="75"/>
    </location>
</feature>
<feature type="glycosylation site" description="N-linked (GlcNAc...) asparagine" evidence="2">
    <location>
        <position position="114"/>
    </location>
</feature>
<feature type="glycosylation site" description="N-linked (GlcNAc...) asparagine" evidence="2">
    <location>
        <position position="177"/>
    </location>
</feature>
<feature type="non-terminal residue">
    <location>
        <position position="1"/>
    </location>
</feature>
<feature type="non-terminal residue">
    <location>
        <position position="257"/>
    </location>
</feature>
<sequence length="257" mass="28480">AKLQTGTAYLPGKHAPLQWTQFDPLEFLEELKKINYQTDSWEELLNKAEVGQGYMNRPCLNPTDPECPVTAPNKNSTKPPDVALILSGGCYGLSKKYMRWQEELIVGGTVKNSNGTLLRAQALQTMFQLMTPKQMYEHFRGYEDVLHINWNEDKAAAILEAWQRMYVEVVHQSVPQNSTQKVLSFTTTTLDDILKSFSDISVIRVASGYLLMLAYACLTMLRWDCAKSQGAVGLAGVLLVALSVAAGLGLCSLIGIS</sequence>
<proteinExistence type="evidence at transcript level"/>
<comment type="function">
    <text evidence="1">Acts as a receptor for sonic hedgehog (SHH), indian hedgehog (IHH) and desert hedgehog (DHH). Associates with the smoothened protein (SMO) to transduce the hedgehog's proteins signal (By similarity).</text>
</comment>
<comment type="subcellular location">
    <subcellularLocation>
        <location>Membrane</location>
        <topology>Multi-pass membrane protein</topology>
    </subcellularLocation>
</comment>
<comment type="tissue specificity">
    <text>In the eye, detected in neural retina, iris, retinal pigment epithelium, but not in lens.</text>
</comment>
<comment type="induction">
    <text>Activated by Sonic hedgehog.</text>
</comment>
<comment type="PTM">
    <text evidence="1">Glycosylation is necessary for SHH binding.</text>
</comment>
<comment type="similarity">
    <text evidence="4">Belongs to the patched family.</text>
</comment>